<name>SECA_BART1</name>
<proteinExistence type="inferred from homology"/>
<organism>
    <name type="scientific">Bartonella tribocorum (strain CIP 105476 / IBS 506)</name>
    <dbReference type="NCBI Taxonomy" id="382640"/>
    <lineage>
        <taxon>Bacteria</taxon>
        <taxon>Pseudomonadati</taxon>
        <taxon>Pseudomonadota</taxon>
        <taxon>Alphaproteobacteria</taxon>
        <taxon>Hyphomicrobiales</taxon>
        <taxon>Bartonellaceae</taxon>
        <taxon>Bartonella</taxon>
    </lineage>
</organism>
<sequence>MVSLGVFARKFFGSAYERRLKVLRQKVAQINALEEQFVKLSDEQLCQKTDAFRKRLSEGENVDSLLPEAFATVREAAKRVYDMRPFDVQLIGGMVLHDCGIAEMRTGEGKTLMATLPIYLNALEGKGVHVVTVNDYLASRDAETMGKIFSFLGMTTGVILHDLDSDARRAAYACDITYATNNELGFDYLRDNMAFDRSQMVQRGHHYAIVDEVDSILIDEARTPLIISGPLEDRTDFYNLIDTFIPALIPEDYEIDEKQKTTTFTEVGTEKIEKMLEQAGYLKGESLYDIENVAIVHHVNNALKAHKLFVRDKDYIVRNDEIVIIDEFTGRMMPGRRYSEGLHQALEAKEHVAIQPENQTLASITFQNYFRMYRKLSGMTGTAATEAEEFRNIYGLDVVEVPTNLPVQRLDEDDEIYRTAEEKYRAIVRDIRQAHEKKQPILVGTTSIEKSEQLAERLRKEGITDFKVLNARYHEQEAYIIAQAGVPGALTIATNMAGRGTDIQLGGNVEMRIRQELQDIPEGPERTAKIEEIKKDVKQLKEKALAAGGLYVIATERHESRRIDNQLRGRSGRQGDPGRSKFFLSLQDDLMRIFGSNRMDGMLQKLGLKENEAIIHPWINKALEKAQKKVEARNFEIRKNLLKYDDVMNDQRKVIFEQRMEVMNADDLSEMIHEMRNDVVEDLVETYIPSGTYSEKWDVKALEEELQQLFNLELPVKEWAKEDGIAEEQILERILDAVTKLEDERTERYSPEVMAYFQKAVLLETIDTLWRENLVSLDHLRSVVGFRGYAQRDPLNEYKTESFELFQSMLKNLRRIVTSKLMRFEIIQQPTEPSMPEQTGADSSVFNDQNQENAPPLWARSQENRFVNPQDRDPNDVTTWGKVGRNERCPCGSEKKYKHCHGAFV</sequence>
<accession>A9IMM8</accession>
<evidence type="ECO:0000255" key="1">
    <source>
        <dbReference type="HAMAP-Rule" id="MF_01382"/>
    </source>
</evidence>
<comment type="function">
    <text evidence="1">Part of the Sec protein translocase complex. Interacts with the SecYEG preprotein conducting channel. Has a central role in coupling the hydrolysis of ATP to the transfer of proteins into and across the cell membrane, serving both as a receptor for the preprotein-SecB complex and as an ATP-driven molecular motor driving the stepwise translocation of polypeptide chains across the membrane.</text>
</comment>
<comment type="catalytic activity">
    <reaction evidence="1">
        <text>ATP + H2O + cellular proteinSide 1 = ADP + phosphate + cellular proteinSide 2.</text>
        <dbReference type="EC" id="7.4.2.8"/>
    </reaction>
</comment>
<comment type="cofactor">
    <cofactor evidence="1">
        <name>Zn(2+)</name>
        <dbReference type="ChEBI" id="CHEBI:29105"/>
    </cofactor>
    <text evidence="1">May bind 1 zinc ion per subunit.</text>
</comment>
<comment type="subunit">
    <text evidence="1">Monomer and homodimer. Part of the essential Sec protein translocation apparatus which comprises SecA, SecYEG and auxiliary proteins SecDF-YajC and YidC.</text>
</comment>
<comment type="subcellular location">
    <subcellularLocation>
        <location evidence="1">Cell inner membrane</location>
        <topology evidence="1">Peripheral membrane protein</topology>
        <orientation evidence="1">Cytoplasmic side</orientation>
    </subcellularLocation>
    <subcellularLocation>
        <location evidence="1">Cytoplasm</location>
    </subcellularLocation>
    <text evidence="1">Distribution is 50-50.</text>
</comment>
<comment type="similarity">
    <text evidence="1">Belongs to the SecA family.</text>
</comment>
<feature type="chain" id="PRO_1000087306" description="Protein translocase subunit SecA">
    <location>
        <begin position="1"/>
        <end position="905"/>
    </location>
</feature>
<feature type="binding site" evidence="1">
    <location>
        <position position="89"/>
    </location>
    <ligand>
        <name>ATP</name>
        <dbReference type="ChEBI" id="CHEBI:30616"/>
    </ligand>
</feature>
<feature type="binding site" evidence="1">
    <location>
        <begin position="107"/>
        <end position="111"/>
    </location>
    <ligand>
        <name>ATP</name>
        <dbReference type="ChEBI" id="CHEBI:30616"/>
    </ligand>
</feature>
<feature type="binding site" evidence="1">
    <location>
        <position position="502"/>
    </location>
    <ligand>
        <name>ATP</name>
        <dbReference type="ChEBI" id="CHEBI:30616"/>
    </ligand>
</feature>
<feature type="binding site" evidence="1">
    <location>
        <position position="889"/>
    </location>
    <ligand>
        <name>Zn(2+)</name>
        <dbReference type="ChEBI" id="CHEBI:29105"/>
    </ligand>
</feature>
<feature type="binding site" evidence="1">
    <location>
        <position position="891"/>
    </location>
    <ligand>
        <name>Zn(2+)</name>
        <dbReference type="ChEBI" id="CHEBI:29105"/>
    </ligand>
</feature>
<feature type="binding site" evidence="1">
    <location>
        <position position="900"/>
    </location>
    <ligand>
        <name>Zn(2+)</name>
        <dbReference type="ChEBI" id="CHEBI:29105"/>
    </ligand>
</feature>
<feature type="binding site" evidence="1">
    <location>
        <position position="901"/>
    </location>
    <ligand>
        <name>Zn(2+)</name>
        <dbReference type="ChEBI" id="CHEBI:29105"/>
    </ligand>
</feature>
<dbReference type="EC" id="7.4.2.8" evidence="1"/>
<dbReference type="EMBL" id="AM260525">
    <property type="protein sequence ID" value="CAK00697.1"/>
    <property type="molecule type" value="Genomic_DNA"/>
</dbReference>
<dbReference type="RefSeq" id="WP_012230610.1">
    <property type="nucleotide sequence ID" value="NC_010161.1"/>
</dbReference>
<dbReference type="SMR" id="A9IMM8"/>
<dbReference type="KEGG" id="btr:BT_0217"/>
<dbReference type="eggNOG" id="COG0653">
    <property type="taxonomic scope" value="Bacteria"/>
</dbReference>
<dbReference type="HOGENOM" id="CLU_005314_3_0_5"/>
<dbReference type="Proteomes" id="UP000001592">
    <property type="component" value="Chromosome"/>
</dbReference>
<dbReference type="GO" id="GO:0031522">
    <property type="term" value="C:cell envelope Sec protein transport complex"/>
    <property type="evidence" value="ECO:0007669"/>
    <property type="project" value="TreeGrafter"/>
</dbReference>
<dbReference type="GO" id="GO:0005829">
    <property type="term" value="C:cytosol"/>
    <property type="evidence" value="ECO:0007669"/>
    <property type="project" value="TreeGrafter"/>
</dbReference>
<dbReference type="GO" id="GO:0005886">
    <property type="term" value="C:plasma membrane"/>
    <property type="evidence" value="ECO:0007669"/>
    <property type="project" value="UniProtKB-SubCell"/>
</dbReference>
<dbReference type="GO" id="GO:0005524">
    <property type="term" value="F:ATP binding"/>
    <property type="evidence" value="ECO:0007669"/>
    <property type="project" value="UniProtKB-UniRule"/>
</dbReference>
<dbReference type="GO" id="GO:0046872">
    <property type="term" value="F:metal ion binding"/>
    <property type="evidence" value="ECO:0007669"/>
    <property type="project" value="UniProtKB-KW"/>
</dbReference>
<dbReference type="GO" id="GO:0008564">
    <property type="term" value="F:protein-exporting ATPase activity"/>
    <property type="evidence" value="ECO:0007669"/>
    <property type="project" value="UniProtKB-EC"/>
</dbReference>
<dbReference type="GO" id="GO:0065002">
    <property type="term" value="P:intracellular protein transmembrane transport"/>
    <property type="evidence" value="ECO:0007669"/>
    <property type="project" value="UniProtKB-UniRule"/>
</dbReference>
<dbReference type="GO" id="GO:0017038">
    <property type="term" value="P:protein import"/>
    <property type="evidence" value="ECO:0007669"/>
    <property type="project" value="InterPro"/>
</dbReference>
<dbReference type="GO" id="GO:0006605">
    <property type="term" value="P:protein targeting"/>
    <property type="evidence" value="ECO:0007669"/>
    <property type="project" value="UniProtKB-UniRule"/>
</dbReference>
<dbReference type="GO" id="GO:0043952">
    <property type="term" value="P:protein transport by the Sec complex"/>
    <property type="evidence" value="ECO:0007669"/>
    <property type="project" value="TreeGrafter"/>
</dbReference>
<dbReference type="CDD" id="cd17928">
    <property type="entry name" value="DEXDc_SecA"/>
    <property type="match status" value="1"/>
</dbReference>
<dbReference type="CDD" id="cd18803">
    <property type="entry name" value="SF2_C_secA"/>
    <property type="match status" value="1"/>
</dbReference>
<dbReference type="FunFam" id="3.90.1440.10:FF:000001">
    <property type="entry name" value="Preprotein translocase subunit SecA"/>
    <property type="match status" value="1"/>
</dbReference>
<dbReference type="FunFam" id="1.10.3060.10:FF:000003">
    <property type="entry name" value="Protein translocase subunit SecA"/>
    <property type="match status" value="1"/>
</dbReference>
<dbReference type="FunFam" id="3.40.50.300:FF:000334">
    <property type="entry name" value="Protein translocase subunit SecA"/>
    <property type="match status" value="1"/>
</dbReference>
<dbReference type="FunFam" id="3.40.50.300:FF:001790">
    <property type="entry name" value="Protein translocase subunit SecA"/>
    <property type="match status" value="1"/>
</dbReference>
<dbReference type="Gene3D" id="1.10.3060.10">
    <property type="entry name" value="Helical scaffold and wing domains of SecA"/>
    <property type="match status" value="1"/>
</dbReference>
<dbReference type="Gene3D" id="3.40.50.300">
    <property type="entry name" value="P-loop containing nucleotide triphosphate hydrolases"/>
    <property type="match status" value="2"/>
</dbReference>
<dbReference type="Gene3D" id="3.90.1440.10">
    <property type="entry name" value="SecA, preprotein cross-linking domain"/>
    <property type="match status" value="1"/>
</dbReference>
<dbReference type="HAMAP" id="MF_01382">
    <property type="entry name" value="SecA"/>
    <property type="match status" value="1"/>
</dbReference>
<dbReference type="InterPro" id="IPR014001">
    <property type="entry name" value="Helicase_ATP-bd"/>
</dbReference>
<dbReference type="InterPro" id="IPR001650">
    <property type="entry name" value="Helicase_C-like"/>
</dbReference>
<dbReference type="InterPro" id="IPR027417">
    <property type="entry name" value="P-loop_NTPase"/>
</dbReference>
<dbReference type="InterPro" id="IPR004027">
    <property type="entry name" value="SEC_C_motif"/>
</dbReference>
<dbReference type="InterPro" id="IPR000185">
    <property type="entry name" value="SecA"/>
</dbReference>
<dbReference type="InterPro" id="IPR011115">
    <property type="entry name" value="SecA_DEAD"/>
</dbReference>
<dbReference type="InterPro" id="IPR014018">
    <property type="entry name" value="SecA_motor_DEAD"/>
</dbReference>
<dbReference type="InterPro" id="IPR011130">
    <property type="entry name" value="SecA_preprotein_X-link_dom"/>
</dbReference>
<dbReference type="InterPro" id="IPR044722">
    <property type="entry name" value="SecA_SF2_C"/>
</dbReference>
<dbReference type="InterPro" id="IPR011116">
    <property type="entry name" value="SecA_Wing/Scaffold"/>
</dbReference>
<dbReference type="InterPro" id="IPR036266">
    <property type="entry name" value="SecA_Wing/Scaffold_sf"/>
</dbReference>
<dbReference type="InterPro" id="IPR036670">
    <property type="entry name" value="SecA_X-link_sf"/>
</dbReference>
<dbReference type="NCBIfam" id="NF009538">
    <property type="entry name" value="PRK12904.1"/>
    <property type="match status" value="1"/>
</dbReference>
<dbReference type="NCBIfam" id="TIGR00963">
    <property type="entry name" value="secA"/>
    <property type="match status" value="1"/>
</dbReference>
<dbReference type="PANTHER" id="PTHR30612:SF0">
    <property type="entry name" value="CHLOROPLAST PROTEIN-TRANSPORTING ATPASE"/>
    <property type="match status" value="1"/>
</dbReference>
<dbReference type="PANTHER" id="PTHR30612">
    <property type="entry name" value="SECA INNER MEMBRANE COMPONENT OF SEC PROTEIN SECRETION SYSTEM"/>
    <property type="match status" value="1"/>
</dbReference>
<dbReference type="Pfam" id="PF21090">
    <property type="entry name" value="P-loop_SecA"/>
    <property type="match status" value="1"/>
</dbReference>
<dbReference type="Pfam" id="PF02810">
    <property type="entry name" value="SEC-C"/>
    <property type="match status" value="1"/>
</dbReference>
<dbReference type="Pfam" id="PF07517">
    <property type="entry name" value="SecA_DEAD"/>
    <property type="match status" value="1"/>
</dbReference>
<dbReference type="Pfam" id="PF01043">
    <property type="entry name" value="SecA_PP_bind"/>
    <property type="match status" value="1"/>
</dbReference>
<dbReference type="Pfam" id="PF07516">
    <property type="entry name" value="SecA_SW"/>
    <property type="match status" value="1"/>
</dbReference>
<dbReference type="PRINTS" id="PR00906">
    <property type="entry name" value="SECA"/>
</dbReference>
<dbReference type="SMART" id="SM00957">
    <property type="entry name" value="SecA_DEAD"/>
    <property type="match status" value="1"/>
</dbReference>
<dbReference type="SMART" id="SM00958">
    <property type="entry name" value="SecA_PP_bind"/>
    <property type="match status" value="1"/>
</dbReference>
<dbReference type="SUPFAM" id="SSF81886">
    <property type="entry name" value="Helical scaffold and wing domains of SecA"/>
    <property type="match status" value="1"/>
</dbReference>
<dbReference type="SUPFAM" id="SSF52540">
    <property type="entry name" value="P-loop containing nucleoside triphosphate hydrolases"/>
    <property type="match status" value="2"/>
</dbReference>
<dbReference type="SUPFAM" id="SSF81767">
    <property type="entry name" value="Pre-protein crosslinking domain of SecA"/>
    <property type="match status" value="1"/>
</dbReference>
<dbReference type="PROSITE" id="PS51196">
    <property type="entry name" value="SECA_MOTOR_DEAD"/>
    <property type="match status" value="1"/>
</dbReference>
<protein>
    <recommendedName>
        <fullName evidence="1">Protein translocase subunit SecA</fullName>
        <ecNumber evidence="1">7.4.2.8</ecNumber>
    </recommendedName>
</protein>
<keyword id="KW-0067">ATP-binding</keyword>
<keyword id="KW-0997">Cell inner membrane</keyword>
<keyword id="KW-1003">Cell membrane</keyword>
<keyword id="KW-0963">Cytoplasm</keyword>
<keyword id="KW-0472">Membrane</keyword>
<keyword id="KW-0479">Metal-binding</keyword>
<keyword id="KW-0547">Nucleotide-binding</keyword>
<keyword id="KW-0653">Protein transport</keyword>
<keyword id="KW-1278">Translocase</keyword>
<keyword id="KW-0811">Translocation</keyword>
<keyword id="KW-0813">Transport</keyword>
<keyword id="KW-0862">Zinc</keyword>
<reference key="1">
    <citation type="journal article" date="2007" name="Nat. Genet.">
        <title>Genomic analysis of Bartonella identifies type IV secretion systems as host adaptability factors.</title>
        <authorList>
            <person name="Saenz H.L."/>
            <person name="Engel P."/>
            <person name="Stoeckli M.C."/>
            <person name="Lanz C."/>
            <person name="Raddatz G."/>
            <person name="Vayssier-Taussat M."/>
            <person name="Birtles R."/>
            <person name="Schuster S.C."/>
            <person name="Dehio C."/>
        </authorList>
    </citation>
    <scope>NUCLEOTIDE SEQUENCE [LARGE SCALE GENOMIC DNA]</scope>
    <source>
        <strain>CIP 105476 / IBS 506</strain>
    </source>
</reference>
<gene>
    <name evidence="1" type="primary">secA</name>
    <name type="ordered locus">BT_0217</name>
</gene>